<sequence length="272" mass="29900">MFPSKVKSAQSLSFSFTKFDPNQEDLIFQGHATSTNNVLQVTKLDSAGNPVSSSAGRVLYSAPLRLWEDSAVLTSFDTIINFEISTPYTSRIADGLAFFIAPPDSVISYHGGFLGLFPNANTLNNSSTSENQTTTKAASSNVVAVEFDTYLNPDYGDPNYIHIGIDVNSIRSKVTAKWDWQNGKIATAHISYNSVSKRLSVTSYYAGSKPATLSYDIELHTVLPEWVRVGLSASTGQDKERNTVHSWSFTSSLWTNVAKKENENKYITRGVL</sequence>
<gene>
    <name evidence="7" type="primary">FRIL</name>
</gene>
<dbReference type="EMBL" id="AF067417">
    <property type="protein sequence ID" value="AAD10734.1"/>
    <property type="molecule type" value="mRNA"/>
</dbReference>
<dbReference type="PDB" id="1QMO">
    <property type="method" value="X-ray"/>
    <property type="resolution" value="3.50 A"/>
    <property type="chains" value="A/B/C/D=9-121, E/F/G/H=140-272"/>
</dbReference>
<dbReference type="PDBsum" id="1QMO"/>
<dbReference type="EMDB" id="EMD-30380"/>
<dbReference type="SMR" id="Q9ZTA9"/>
<dbReference type="UniLectin" id="Q9ZTA9"/>
<dbReference type="GlyCosmos" id="Q9ZTA9">
    <property type="glycosylation" value="2 sites, No reported glycans"/>
</dbReference>
<dbReference type="iPTMnet" id="Q9ZTA9"/>
<dbReference type="EvolutionaryTrace" id="Q9ZTA9"/>
<dbReference type="GO" id="GO:0034495">
    <property type="term" value="C:protein storage vacuole lumen"/>
    <property type="evidence" value="ECO:0007669"/>
    <property type="project" value="UniProtKB-SubCell"/>
</dbReference>
<dbReference type="GO" id="GO:0030246">
    <property type="term" value="F:carbohydrate binding"/>
    <property type="evidence" value="ECO:0007669"/>
    <property type="project" value="UniProtKB-KW"/>
</dbReference>
<dbReference type="CDD" id="cd06899">
    <property type="entry name" value="lectin_legume_LecRK_Arcelin_ConA"/>
    <property type="match status" value="1"/>
</dbReference>
<dbReference type="Gene3D" id="2.60.120.200">
    <property type="match status" value="1"/>
</dbReference>
<dbReference type="InterPro" id="IPR013320">
    <property type="entry name" value="ConA-like_dom_sf"/>
</dbReference>
<dbReference type="InterPro" id="IPR016363">
    <property type="entry name" value="L-lectin"/>
</dbReference>
<dbReference type="InterPro" id="IPR000985">
    <property type="entry name" value="Lectin_LegA_CS"/>
</dbReference>
<dbReference type="InterPro" id="IPR019825">
    <property type="entry name" value="Lectin_legB_Mn/Ca_BS"/>
</dbReference>
<dbReference type="InterPro" id="IPR001220">
    <property type="entry name" value="Legume_lectin_dom"/>
</dbReference>
<dbReference type="InterPro" id="IPR050258">
    <property type="entry name" value="Leguminous_Lectin"/>
</dbReference>
<dbReference type="PANTHER" id="PTHR32401">
    <property type="entry name" value="CONCANAVALIN A-LIKE LECTIN FAMILY PROTEIN"/>
    <property type="match status" value="1"/>
</dbReference>
<dbReference type="PANTHER" id="PTHR32401:SF47">
    <property type="entry name" value="LEGUME LECTIN DOMAIN-CONTAINING PROTEIN"/>
    <property type="match status" value="1"/>
</dbReference>
<dbReference type="Pfam" id="PF00139">
    <property type="entry name" value="Lectin_legB"/>
    <property type="match status" value="1"/>
</dbReference>
<dbReference type="PIRSF" id="PIRSF002690">
    <property type="entry name" value="L-type_lectin_plant"/>
    <property type="match status" value="1"/>
</dbReference>
<dbReference type="SUPFAM" id="SSF49899">
    <property type="entry name" value="Concanavalin A-like lectins/glucanases"/>
    <property type="match status" value="1"/>
</dbReference>
<dbReference type="PROSITE" id="PS00308">
    <property type="entry name" value="LECTIN_LEGUME_ALPHA"/>
    <property type="match status" value="1"/>
</dbReference>
<dbReference type="PROSITE" id="PS00307">
    <property type="entry name" value="LECTIN_LEGUME_BETA"/>
    <property type="match status" value="1"/>
</dbReference>
<proteinExistence type="evidence at protein level"/>
<name>FRIL_LABPU</name>
<accession>Q9ZTA9</accession>
<organism evidence="10">
    <name type="scientific">Lablab purpureus</name>
    <name type="common">Hyacinth bean</name>
    <name type="synonym">Dolichos lablab</name>
    <dbReference type="NCBI Taxonomy" id="35936"/>
    <lineage>
        <taxon>Eukaryota</taxon>
        <taxon>Viridiplantae</taxon>
        <taxon>Streptophyta</taxon>
        <taxon>Embryophyta</taxon>
        <taxon>Tracheophyta</taxon>
        <taxon>Spermatophyta</taxon>
        <taxon>Magnoliopsida</taxon>
        <taxon>eudicotyledons</taxon>
        <taxon>Gunneridae</taxon>
        <taxon>Pentapetalae</taxon>
        <taxon>rosids</taxon>
        <taxon>fabids</taxon>
        <taxon>Fabales</taxon>
        <taxon>Fabaceae</taxon>
        <taxon>Papilionoideae</taxon>
        <taxon>50 kb inversion clade</taxon>
        <taxon>NPAAA clade</taxon>
        <taxon>indigoferoid/millettioid clade</taxon>
        <taxon>Phaseoleae</taxon>
        <taxon>Lablab</taxon>
    </lineage>
</organism>
<keyword id="KW-0002">3D-structure</keyword>
<keyword id="KW-0903">Direct protein sequencing</keyword>
<keyword id="KW-0325">Glycoprotein</keyword>
<keyword id="KW-0430">Lectin</keyword>
<keyword id="KW-0732">Signal</keyword>
<keyword id="KW-0926">Vacuole</keyword>
<evidence type="ECO:0000269" key="1">
    <source>
    </source>
</evidence>
<evidence type="ECO:0000269" key="2">
    <source>
    </source>
</evidence>
<evidence type="ECO:0000269" key="3">
    <source>
    </source>
</evidence>
<evidence type="ECO:0000269" key="4">
    <source>
    </source>
</evidence>
<evidence type="ECO:0000269" key="5">
    <source>
    </source>
</evidence>
<evidence type="ECO:0000303" key="6">
    <source>
    </source>
</evidence>
<evidence type="ECO:0000303" key="7">
    <source>
    </source>
</evidence>
<evidence type="ECO:0000305" key="8"/>
<evidence type="ECO:0000305" key="9">
    <source>
    </source>
</evidence>
<evidence type="ECO:0000312" key="10">
    <source>
        <dbReference type="EMBL" id="AAD10734.1"/>
    </source>
</evidence>
<evidence type="ECO:0007744" key="11">
    <source>
        <dbReference type="PDB" id="1QMO"/>
    </source>
</evidence>
<evidence type="ECO:0007829" key="12">
    <source>
        <dbReference type="PDB" id="1QMO"/>
    </source>
</evidence>
<feature type="signal peptide" evidence="9">
    <location>
        <begin position="1"/>
        <end position="8"/>
    </location>
</feature>
<feature type="chain" id="PRO_0000434745" description="Lectin beta chain" evidence="9">
    <location>
        <begin position="9"/>
        <end position="124"/>
    </location>
</feature>
<feature type="chain" id="PRO_0000434746" description="Lectin alpha chain" evidence="9">
    <location>
        <begin position="125"/>
        <end position="272"/>
    </location>
</feature>
<feature type="chain" id="PRO_0000434747" description="Lectin alpha-1 chain" evidence="9">
    <location>
        <begin position="133"/>
        <end position="272"/>
    </location>
</feature>
<feature type="binding site" evidence="11">
    <location>
        <position position="94"/>
    </location>
    <ligand>
        <name>alpha-D-mannopyranose</name>
        <dbReference type="ChEBI" id="CHEBI:28729"/>
    </ligand>
</feature>
<feature type="binding site" evidence="1 11">
    <location>
        <position position="112"/>
    </location>
    <ligand>
        <name>alpha-D-mannopyranose</name>
        <dbReference type="ChEBI" id="CHEBI:28729"/>
    </ligand>
</feature>
<feature type="binding site" evidence="1 11">
    <location>
        <position position="152"/>
    </location>
    <ligand>
        <name>alpha-D-mannopyranose</name>
        <dbReference type="ChEBI" id="CHEBI:28729"/>
    </ligand>
</feature>
<feature type="binding site" evidence="1 11">
    <location>
        <begin position="237"/>
        <end position="238"/>
    </location>
    <ligand>
        <name>alpha-D-mannopyranose</name>
        <dbReference type="ChEBI" id="CHEBI:28729"/>
    </ligand>
</feature>
<feature type="glycosylation site" description="N-linked (GlcNAc...) asparagine" evidence="3">
    <location>
        <position position="125"/>
    </location>
</feature>
<feature type="glycosylation site" description="N-linked (GlcNAc...) asparagine" evidence="3 4">
    <location>
        <position position="131"/>
    </location>
</feature>
<feature type="sequence conflict" description="In Ref. 1; AA sequence." evidence="8" ref="1">
    <original>S</original>
    <variation>SS</variation>
    <location>
        <position position="34"/>
    </location>
</feature>
<feature type="sequence conflict" description="In Ref. 2; AA sequence." evidence="3" ref="2">
    <original>V</original>
    <variation>L</variation>
    <location>
        <position position="41"/>
    </location>
</feature>
<feature type="sequence conflict" description="In Ref. 1; AA sequence." evidence="8" ref="1">
    <original>D</original>
    <variation>K</variation>
    <location>
        <position position="148"/>
    </location>
</feature>
<feature type="sequence conflict" description="In Ref. 2; AA sequence." evidence="3" ref="2">
    <original>S</original>
    <variation>T</variation>
    <location>
        <position position="203"/>
    </location>
</feature>
<feature type="sequence conflict" description="In Ref. 2; AA sequence." evidence="3" ref="2">
    <original>A</original>
    <variation>P</variation>
    <location>
        <position position="206"/>
    </location>
</feature>
<feature type="strand" evidence="12">
    <location>
        <begin position="10"/>
        <end position="18"/>
    </location>
</feature>
<feature type="strand" evidence="12">
    <location>
        <begin position="26"/>
        <end position="30"/>
    </location>
</feature>
<feature type="strand" evidence="12">
    <location>
        <begin position="33"/>
        <end position="35"/>
    </location>
</feature>
<feature type="strand" evidence="12">
    <location>
        <begin position="38"/>
        <end position="40"/>
    </location>
</feature>
<feature type="strand" evidence="12">
    <location>
        <begin position="55"/>
        <end position="62"/>
    </location>
</feature>
<feature type="strand" evidence="12">
    <location>
        <begin position="71"/>
        <end position="85"/>
    </location>
</feature>
<feature type="strand" evidence="12">
    <location>
        <begin position="87"/>
        <end position="90"/>
    </location>
</feature>
<feature type="strand" evidence="12">
    <location>
        <begin position="95"/>
        <end position="101"/>
    </location>
</feature>
<feature type="helix" evidence="12">
    <location>
        <begin position="111"/>
        <end position="113"/>
    </location>
</feature>
<feature type="turn" evidence="12">
    <location>
        <begin position="114"/>
        <end position="116"/>
    </location>
</feature>
<feature type="strand" evidence="12">
    <location>
        <begin position="143"/>
        <end position="148"/>
    </location>
</feature>
<feature type="helix" evidence="12">
    <location>
        <begin position="153"/>
        <end position="155"/>
    </location>
</feature>
<feature type="strand" evidence="12">
    <location>
        <begin position="162"/>
        <end position="171"/>
    </location>
</feature>
<feature type="strand" evidence="12">
    <location>
        <begin position="173"/>
        <end position="177"/>
    </location>
</feature>
<feature type="strand" evidence="12">
    <location>
        <begin position="186"/>
        <end position="193"/>
    </location>
</feature>
<feature type="turn" evidence="12">
    <location>
        <begin position="194"/>
        <end position="197"/>
    </location>
</feature>
<feature type="strand" evidence="12">
    <location>
        <begin position="198"/>
        <end position="204"/>
    </location>
</feature>
<feature type="strand" evidence="12">
    <location>
        <begin position="206"/>
        <end position="208"/>
    </location>
</feature>
<feature type="strand" evidence="12">
    <location>
        <begin position="211"/>
        <end position="216"/>
    </location>
</feature>
<feature type="helix" evidence="12">
    <location>
        <begin position="219"/>
        <end position="221"/>
    </location>
</feature>
<feature type="strand" evidence="12">
    <location>
        <begin position="225"/>
        <end position="234"/>
    </location>
</feature>
<feature type="strand" evidence="12">
    <location>
        <begin position="236"/>
        <end position="238"/>
    </location>
</feature>
<feature type="strand" evidence="12">
    <location>
        <begin position="241"/>
        <end position="255"/>
    </location>
</feature>
<protein>
    <recommendedName>
        <fullName evidence="7">Flt3 receptor-interacting lectin</fullName>
    </recommendedName>
    <component>
        <recommendedName>
            <fullName evidence="7">Lectin alpha chain</fullName>
        </recommendedName>
    </component>
    <component>
        <recommendedName>
            <fullName evidence="7">Lectin beta chain</fullName>
        </recommendedName>
    </component>
    <component>
        <recommendedName>
            <fullName evidence="7">Lectin alpha-1 chain</fullName>
        </recommendedName>
    </component>
</protein>
<reference key="1">
    <citation type="journal article" date="1999" name="Proc. Natl. Acad. Sci. U.S.A.">
        <title>cDNA cloning of FRIL, a lectin from Dolichos lablab, that preserves hematopoietic progenitors in suspension culture.</title>
        <authorList>
            <person name="Colucci G."/>
            <person name="Moore J.G."/>
            <person name="Feldman M."/>
            <person name="Chrispeels M.J."/>
        </authorList>
    </citation>
    <scope>NUCLEOTIDE SEQUENCE [MRNA]</scope>
    <scope>PROTEIN SEQUENCE OF 9-38 AND 125-152</scope>
    <scope>GLYCOSYLATION AT ASN-131</scope>
    <scope>FUNCTION</scope>
    <scope>BIOTECHNOLOGY</scope>
    <source>
        <tissue>Cotyledon</tissue>
    </source>
</reference>
<reference key="2">
    <citation type="journal article" date="2014" name="Int. J. Biol. Macromol.">
        <title>N-glycan analysis of mannose/glucose specific lectin from Dolichos lablab seeds.</title>
        <authorList>
            <person name="B S G.K."/>
            <person name="Pohlentz G."/>
            <person name="Schulte M."/>
            <person name="Mormann M."/>
            <person name="Nadimpalli S.K."/>
        </authorList>
    </citation>
    <scope>PARTIAL PROTEIN SEQUENCE</scope>
    <scope>IDENTIFICATION BY MASS SPECTROMETRY</scope>
    <scope>GLYCOSYLATION AT ASN-125 AND ASN-131</scope>
    <scope>SUBCELLULAR LOCATION</scope>
</reference>
<reference key="3">
    <citation type="journal article" date="1999" name="Glycobiology">
        <title>Purification and characterization of Dolichos lablab lectin.</title>
        <authorList>
            <person name="Mo H."/>
            <person name="Meah Y."/>
            <person name="Moore J.G."/>
            <person name="Goldstein I.J."/>
        </authorList>
    </citation>
    <scope>SUBUNIT</scope>
    <scope>FUNCTION</scope>
</reference>
<reference key="4">
    <citation type="journal article" date="2000" name="Exp. Hematol.">
        <title>The plant lectin FRIL supports prolonged in vitro maintenance of quiescent human cord blood CD34(+)CD38(-/low)/SCID repopulating stem cells.</title>
        <authorList>
            <person name="Kollet O."/>
            <person name="Moore J.G."/>
            <person name="Aviram R."/>
            <person name="Ben-Hur H."/>
            <person name="Liu B.L."/>
            <person name="Nagler A."/>
            <person name="Shultz L."/>
            <person name="Feldman M."/>
            <person name="Lapidot T."/>
        </authorList>
    </citation>
    <scope>BIOTECHNOLOGY</scope>
</reference>
<reference key="5">
    <citation type="journal article" date="2000" name="J. Mol. Biol.">
        <title>The role of weak protein-protein interactions in multivalent lectin-carbohydrate binding: crystal structure of cross-linked FRIL.</title>
        <authorList>
            <person name="Hamelryck T.W."/>
            <person name="Moore J.G."/>
            <person name="Chrispeels M.J."/>
            <person name="Loris R."/>
            <person name="Wyns L."/>
        </authorList>
    </citation>
    <scope>X-RAY CRYSTALLOGRAPHY (3.50 ANGSTROMS) OF 9-121 AND 140-272 IN COMPLEX WITH MANNOSE</scope>
    <scope>SUBUNIT</scope>
</reference>
<comment type="function">
    <text evidence="4 5">Mannose-binding lectin (PubMed:9892687). Accommodates most effectively a non-reducing terminal alpha-d-mannosyl unit. Strongly precipitates murine IgM but not IgG (PubMed:9949194).</text>
</comment>
<comment type="subunit">
    <text evidence="1 5">Dimer (alpha/beta)2 (PubMed:9949194). Tetramer (alpha/beta)4 (PubMed:10843844).</text>
</comment>
<comment type="subcellular location">
    <subcellularLocation>
        <location evidence="6">Protein storage vacuole lumen</location>
    </subcellularLocation>
</comment>
<comment type="PTM">
    <text evidence="3">Glycosylated at Asn-125 by either a paucimannose type N-glycan (alpha-4) or a single N-acetylglucosamine (alpha-3). Glycosylated at Asn-131 by a paucimannose type N-glycan (alpha-2, alpha-3 and alpha-4). In alpha-2, Asn-125 is deamidated to an Asp, possibly due to the action of intrinsic peptide N-glycosidase (PGNase).</text>
</comment>
<comment type="biotechnology">
    <text evidence="2 4">Preserves hematopoietic progenitors in suspension culture by preventing their proliferation and differentiation even in the presence of a cytokine known for its strong induction of proliferation and differentiation (PubMed:9892687). FRIL's ability to preserve quiescent primitive cells in a reversible manner may significantly expand the time and range of ex vivo manipulations of human stem cells for clinical applications (PubMed:10880759).</text>
</comment>
<comment type="miscellaneous">
    <text evidence="4">Four different alpha subunits (alpha-1, alpha-2, alpha-3 and alpha-4) are observed and their different polypeptide masses might be due to differential C-terminal processing of the corresponding polypeptide or to differential N-glycosylation of subunits. Alpha-1 lacks the 8 amino acids N-terminal sequence present in the other alpha subunits. Alpha-2 and Alpha-4 differ in their glycosylation pattern. Alpha-3 et Alpha-4 are N-glycosylated at their N-terminus. The Asn N-terminus of alpha-2 is deamidated into Asp.</text>
</comment>
<comment type="similarity">
    <text evidence="8">Belongs to the leguminous lectin family.</text>
</comment>
<comment type="caution">
    <text evidence="6">The amino acid substitutions in both the subunits found in PubMed:24907509 might have resulted from different cultivars or growing conditions of the plant used in the study.</text>
</comment>